<dbReference type="EMBL" id="AF126489">
    <property type="protein sequence ID" value="AAD25082.1"/>
    <property type="molecule type" value="Genomic_DNA"/>
</dbReference>
<dbReference type="EMBL" id="AF143447">
    <property type="protein sequence ID" value="AAD33898.1"/>
    <property type="molecule type" value="mRNA"/>
</dbReference>
<dbReference type="RefSeq" id="NP_001105509.1">
    <property type="nucleotide sequence ID" value="NM_001112039.2"/>
</dbReference>
<dbReference type="SMR" id="Q9S7B2"/>
<dbReference type="FunCoup" id="Q9S7B2">
    <property type="interactions" value="1688"/>
</dbReference>
<dbReference type="IntAct" id="Q9S7B2">
    <property type="interactions" value="4"/>
</dbReference>
<dbReference type="STRING" id="4577.Q9S7B2"/>
<dbReference type="PaxDb" id="4577-GRMZM2G403620_P01"/>
<dbReference type="EnsemblPlants" id="Zm00001eb029300_T001">
    <property type="protein sequence ID" value="Zm00001eb029300_P001"/>
    <property type="gene ID" value="Zm00001eb029300"/>
</dbReference>
<dbReference type="EnsemblPlants" id="Zm00001eb029300_T002">
    <property type="protein sequence ID" value="Zm00001eb029300_P002"/>
    <property type="gene ID" value="Zm00001eb029300"/>
</dbReference>
<dbReference type="GeneID" id="542488"/>
<dbReference type="Gramene" id="Zm00001eb029300_T001">
    <property type="protein sequence ID" value="Zm00001eb029300_P001"/>
    <property type="gene ID" value="Zm00001eb029300"/>
</dbReference>
<dbReference type="Gramene" id="Zm00001eb029300_T002">
    <property type="protein sequence ID" value="Zm00001eb029300_P002"/>
    <property type="gene ID" value="Zm00001eb029300"/>
</dbReference>
<dbReference type="KEGG" id="zma:542488"/>
<dbReference type="MaizeGDB" id="726059"/>
<dbReference type="eggNOG" id="KOG0048">
    <property type="taxonomic scope" value="Eukaryota"/>
</dbReference>
<dbReference type="HOGENOM" id="CLU_864276_0_0_1"/>
<dbReference type="InParanoid" id="Q9S7B2"/>
<dbReference type="OMA" id="EEGHHAW"/>
<dbReference type="OrthoDB" id="2143914at2759"/>
<dbReference type="Proteomes" id="UP000007305">
    <property type="component" value="Chromosome 1"/>
</dbReference>
<dbReference type="ExpressionAtlas" id="Q9S7B2">
    <property type="expression patterns" value="baseline and differential"/>
</dbReference>
<dbReference type="GO" id="GO:0000793">
    <property type="term" value="C:condensed chromosome"/>
    <property type="evidence" value="ECO:0007669"/>
    <property type="project" value="EnsemblPlants"/>
</dbReference>
<dbReference type="GO" id="GO:0005730">
    <property type="term" value="C:nucleolus"/>
    <property type="evidence" value="ECO:0007669"/>
    <property type="project" value="EnsemblPlants"/>
</dbReference>
<dbReference type="GO" id="GO:0042803">
    <property type="term" value="F:protein homodimerization activity"/>
    <property type="evidence" value="ECO:0007669"/>
    <property type="project" value="EnsemblPlants"/>
</dbReference>
<dbReference type="GO" id="GO:0000976">
    <property type="term" value="F:transcription cis-regulatory region binding"/>
    <property type="evidence" value="ECO:0007669"/>
    <property type="project" value="EnsemblPlants"/>
</dbReference>
<dbReference type="GO" id="GO:0008356">
    <property type="term" value="P:asymmetric cell division"/>
    <property type="evidence" value="ECO:0007669"/>
    <property type="project" value="EnsemblPlants"/>
</dbReference>
<dbReference type="GO" id="GO:0042742">
    <property type="term" value="P:defense response to bacterium"/>
    <property type="evidence" value="ECO:0007669"/>
    <property type="project" value="EnsemblPlants"/>
</dbReference>
<dbReference type="GO" id="GO:0050832">
    <property type="term" value="P:defense response to fungus"/>
    <property type="evidence" value="ECO:0007669"/>
    <property type="project" value="EnsemblPlants"/>
</dbReference>
<dbReference type="GO" id="GO:0010338">
    <property type="term" value="P:leaf formation"/>
    <property type="evidence" value="ECO:0007669"/>
    <property type="project" value="EnsemblPlants"/>
</dbReference>
<dbReference type="GO" id="GO:0045892">
    <property type="term" value="P:negative regulation of DNA-templated transcription"/>
    <property type="evidence" value="ECO:0007669"/>
    <property type="project" value="EnsemblPlants"/>
</dbReference>
<dbReference type="GO" id="GO:0009944">
    <property type="term" value="P:polarity specification of adaxial/abaxial axis"/>
    <property type="evidence" value="ECO:0007669"/>
    <property type="project" value="EnsemblPlants"/>
</dbReference>
<dbReference type="GO" id="GO:0009946">
    <property type="term" value="P:proximal/distal axis specification"/>
    <property type="evidence" value="ECO:0007669"/>
    <property type="project" value="EnsemblPlants"/>
</dbReference>
<dbReference type="GO" id="GO:0045088">
    <property type="term" value="P:regulation of innate immune response"/>
    <property type="evidence" value="ECO:0007669"/>
    <property type="project" value="EnsemblPlants"/>
</dbReference>
<dbReference type="GO" id="GO:0009615">
    <property type="term" value="P:response to virus"/>
    <property type="evidence" value="ECO:0007669"/>
    <property type="project" value="EnsemblPlants"/>
</dbReference>
<dbReference type="CDD" id="cd00167">
    <property type="entry name" value="SANT"/>
    <property type="match status" value="2"/>
</dbReference>
<dbReference type="FunFam" id="1.10.10.60:FF:000449">
    <property type="entry name" value="MYB-related transcription factor"/>
    <property type="match status" value="1"/>
</dbReference>
<dbReference type="Gene3D" id="1.10.10.60">
    <property type="entry name" value="Homeodomain-like"/>
    <property type="match status" value="2"/>
</dbReference>
<dbReference type="InterPro" id="IPR009057">
    <property type="entry name" value="Homeodomain-like_sf"/>
</dbReference>
<dbReference type="InterPro" id="IPR052844">
    <property type="entry name" value="Leaf_Dev_Regulator"/>
</dbReference>
<dbReference type="InterPro" id="IPR017930">
    <property type="entry name" value="Myb_dom"/>
</dbReference>
<dbReference type="InterPro" id="IPR001005">
    <property type="entry name" value="SANT/Myb"/>
</dbReference>
<dbReference type="PANTHER" id="PTHR47214">
    <property type="entry name" value="PROTEIN ROUGH SHEATH 2 HOMOLOG"/>
    <property type="match status" value="1"/>
</dbReference>
<dbReference type="PANTHER" id="PTHR47214:SF3">
    <property type="entry name" value="TRANSCRIPTION FACTOR AS1"/>
    <property type="match status" value="1"/>
</dbReference>
<dbReference type="Pfam" id="PF13921">
    <property type="entry name" value="Myb_DNA-bind_6"/>
    <property type="match status" value="1"/>
</dbReference>
<dbReference type="SMART" id="SM00717">
    <property type="entry name" value="SANT"/>
    <property type="match status" value="2"/>
</dbReference>
<dbReference type="SUPFAM" id="SSF46689">
    <property type="entry name" value="Homeodomain-like"/>
    <property type="match status" value="1"/>
</dbReference>
<dbReference type="PROSITE" id="PS51294">
    <property type="entry name" value="HTH_MYB"/>
    <property type="match status" value="2"/>
</dbReference>
<keyword id="KW-0175">Coiled coil</keyword>
<keyword id="KW-0238">DNA-binding</keyword>
<keyword id="KW-0539">Nucleus</keyword>
<keyword id="KW-1185">Reference proteome</keyword>
<keyword id="KW-0677">Repeat</keyword>
<keyword id="KW-0804">Transcription</keyword>
<keyword id="KW-0805">Transcription regulation</keyword>
<organism>
    <name type="scientific">Zea mays</name>
    <name type="common">Maize</name>
    <dbReference type="NCBI Taxonomy" id="4577"/>
    <lineage>
        <taxon>Eukaryota</taxon>
        <taxon>Viridiplantae</taxon>
        <taxon>Streptophyta</taxon>
        <taxon>Embryophyta</taxon>
        <taxon>Tracheophyta</taxon>
        <taxon>Spermatophyta</taxon>
        <taxon>Magnoliopsida</taxon>
        <taxon>Liliopsida</taxon>
        <taxon>Poales</taxon>
        <taxon>Poaceae</taxon>
        <taxon>PACMAD clade</taxon>
        <taxon>Panicoideae</taxon>
        <taxon>Andropogonodae</taxon>
        <taxon>Andropogoneae</taxon>
        <taxon>Tripsacinae</taxon>
        <taxon>Zea</taxon>
    </lineage>
</organism>
<evidence type="ECO:0000255" key="1"/>
<evidence type="ECO:0000255" key="2">
    <source>
        <dbReference type="PROSITE-ProRule" id="PRU00625"/>
    </source>
</evidence>
<evidence type="ECO:0000256" key="3">
    <source>
        <dbReference type="SAM" id="MobiDB-lite"/>
    </source>
</evidence>
<evidence type="ECO:0000269" key="4">
    <source>
    </source>
</evidence>
<evidence type="ECO:0000269" key="5">
    <source>
    </source>
</evidence>
<evidence type="ECO:0000269" key="6">
    <source>
    </source>
</evidence>
<evidence type="ECO:0000269" key="7">
    <source>
    </source>
</evidence>
<reference key="1">
    <citation type="journal article" date="1999" name="Science">
        <title>ROUGH SHEATH2: a Myb protein that represses knox homeobox genes in maize lateral organ primordia.</title>
        <authorList>
            <person name="Timmermans M.C.P."/>
            <person name="Hudson A."/>
            <person name="Becraft P.W."/>
            <person name="Nelson T."/>
        </authorList>
    </citation>
    <scope>NUCLEOTIDE SEQUENCE [MRNA]</scope>
    <scope>TISSUE SPECIFICITY</scope>
    <scope>FUNCTION</scope>
    <source>
        <strain>cv. B73</strain>
    </source>
</reference>
<reference key="2">
    <citation type="journal article" date="2005" name="Plant Cell">
        <title>Maize rough sheath2 and its Arabidopsis orthologue ASYMMETRIC LEAVES1 interact with HIRA, a predicted histone chaperone, to maintain knox gene silencing and determinacy during organogenesis.</title>
        <authorList>
            <person name="Phelps-Durr T.L."/>
            <person name="Thomas J."/>
            <person name="Vahab P."/>
            <person name="Timmermans M.C.P."/>
        </authorList>
    </citation>
    <scope>NUCLEOTIDE SEQUENCE [MRNA]</scope>
    <scope>TISSUE SPECIFICITY</scope>
    <scope>INTERACTION WITH AS2; WRKY1; RIK AND HIRA</scope>
</reference>
<reference key="3">
    <citation type="journal article" date="1999" name="Science">
        <title>The maize rough sheath2 gene and leaf development programs in monocot and dicot plants.</title>
        <authorList>
            <person name="Tsiantis M."/>
            <person name="Schneeberger R."/>
            <person name="Golz J.F."/>
            <person name="Freeling M."/>
            <person name="Langdale J.A."/>
        </authorList>
    </citation>
    <scope>NUCLEOTIDE SEQUENCE [GENOMIC DNA]</scope>
</reference>
<reference key="4">
    <citation type="journal article" date="1998" name="Development">
        <title>The rough sheath2 gene negatively regulates homeobox gene expression during maize leaf development.</title>
        <authorList>
            <person name="Schneeberger R."/>
            <person name="Tsiantis M."/>
            <person name="Freeling M."/>
            <person name="Langdale J.A."/>
        </authorList>
    </citation>
    <scope>FUNCTION</scope>
</reference>
<reference key="5">
    <citation type="journal article" date="2003" name="Proc. Natl. Acad. Sci. U.S.A.">
        <title>Conservation and molecular dissection of ROUGH SHEATH2 and ASYMMETRIC LEAVES1 function in leaf development.</title>
        <authorList>
            <person name="Theodoris G."/>
            <person name="Inada N."/>
            <person name="Freeling M."/>
        </authorList>
    </citation>
    <scope>FUNCTION</scope>
    <scope>SUBCELLULAR LOCATION</scope>
    <scope>SUBUNIT</scope>
</reference>
<accession>Q9S7B2</accession>
<comment type="function">
    <text evidence="4 5 7">Transcription factor required for normal cell differentiation. Interacts directly with asymmetric leaves 2 (AS2) to repress the knox homeobox genes.</text>
</comment>
<comment type="subunit">
    <text evidence="5 6">Homodimer. Interacts with AS2, WRKY1, HIRA, a probable histone chaperone, and RIK, a predicted RNA binding protein.</text>
</comment>
<comment type="interaction">
    <interactant intactId="EBI-761350">
        <id>Q9S7B2</id>
    </interactant>
    <interactant intactId="EBI-761239">
        <id>Q32SG3</id>
        <label>LBD6</label>
    </interactant>
    <organismsDiffer>false</organismsDiffer>
    <experiments>2</experiments>
</comment>
<comment type="interaction">
    <interactant intactId="EBI-761350">
        <id>Q9S7B2</id>
    </interactant>
    <interactant intactId="EBI-761253">
        <id>Q32SG4</id>
    </interactant>
    <organismsDiffer>false</organismsDiffer>
    <experiments>2</experiments>
</comment>
<comment type="interaction">
    <interactant intactId="EBI-761350">
        <id>Q9S7B2</id>
    </interactant>
    <interactant intactId="EBI-761296">
        <id>Q32SG5</id>
    </interactant>
    <organismsDiffer>false</organismsDiffer>
    <experiments>2</experiments>
</comment>
<comment type="interaction">
    <interactant intactId="EBI-761350">
        <id>Q9S7B2</id>
    </interactant>
    <interactant intactId="EBI-761318">
        <id>Q32SG6</id>
    </interactant>
    <organismsDiffer>false</organismsDiffer>
    <experiments>2</experiments>
</comment>
<comment type="subcellular location">
    <subcellularLocation>
        <location evidence="2 5">Nucleus</location>
    </subcellularLocation>
    <text>Localized in discrete subnuclear bodies.</text>
</comment>
<comment type="tissue specificity">
    <text evidence="4 6">Expressed in lateral organ promordia.</text>
</comment>
<comment type="domain">
    <text>A C-terminal domain (245-347) is required for dimerization.</text>
</comment>
<protein>
    <recommendedName>
        <fullName>Protein rough sheath 2</fullName>
    </recommendedName>
    <alternativeName>
        <fullName>Protein PHANTASTICA</fullName>
    </alternativeName>
    <alternativeName>
        <fullName>ZmPHAN</fullName>
    </alternativeName>
</protein>
<feature type="chain" id="PRO_0000299135" description="Protein rough sheath 2">
    <location>
        <begin position="1"/>
        <end position="370"/>
    </location>
</feature>
<feature type="domain" description="HTH myb-type 1" evidence="2">
    <location>
        <begin position="1"/>
        <end position="53"/>
    </location>
</feature>
<feature type="domain" description="HTH myb-type 2" evidence="2">
    <location>
        <begin position="54"/>
        <end position="108"/>
    </location>
</feature>
<feature type="DNA-binding region" description="H-T-H motif" evidence="2">
    <location>
        <begin position="27"/>
        <end position="53"/>
    </location>
</feature>
<feature type="DNA-binding region" description="H-T-H motif" evidence="2">
    <location>
        <begin position="81"/>
        <end position="104"/>
    </location>
</feature>
<feature type="region of interest" description="Disordered" evidence="3">
    <location>
        <begin position="107"/>
        <end position="129"/>
    </location>
</feature>
<feature type="coiled-coil region" evidence="1">
    <location>
        <begin position="276"/>
        <end position="340"/>
    </location>
</feature>
<gene>
    <name type="primary">RS2</name>
</gene>
<name>RS2_MAIZE</name>
<sequence length="370" mass="41919">MKERQRWRPEEDAVLRAYVRQYGPREWHLVSQRMNVALDRDAKSCLERWKNYLRPGIKKGSLTEEEQRLVIRLQAKHGNKWKKIAAEVPGRTAKRLGKWWEVFKEKQQRELRDSRRPPPEPSPDERGRYEWLLENFAEKLVGERPQQAAAAPSPLLMAAPVLPPWLSSNAGPAAAAAAAVAHPPPRPPSPSVTLSLASAAVAPGPPAPAPWMPDRAAADAAPYGFPSPSQHGGAAPPGMAVVDGQALAELAECCRELEEGRRAWAAHRREAAWRLKRVEQQLEMEREMRRREVWEEFEAKMRTMRLEQAAAAERVERDHREKVAELRRDAQVKEEKMAEQWAAKHARVAKFVEQMGGCSRSWSSATDMNC</sequence>
<proteinExistence type="evidence at protein level"/>